<evidence type="ECO:0000255" key="1">
    <source>
        <dbReference type="HAMAP-Rule" id="MF_00059"/>
    </source>
</evidence>
<feature type="chain" id="PRO_0000175307" description="DNA-directed RNA polymerase subunit alpha">
    <location>
        <begin position="1"/>
        <end position="312"/>
    </location>
</feature>
<feature type="region of interest" description="Alpha N-terminal domain (alpha-NTD)" evidence="1">
    <location>
        <begin position="1"/>
        <end position="226"/>
    </location>
</feature>
<feature type="region of interest" description="Alpha C-terminal domain (alpha-CTD)" evidence="1">
    <location>
        <begin position="243"/>
        <end position="312"/>
    </location>
</feature>
<accession>Q839D9</accession>
<dbReference type="EC" id="2.7.7.6" evidence="1"/>
<dbReference type="EMBL" id="AE016830">
    <property type="protein sequence ID" value="AAO80101.1"/>
    <property type="molecule type" value="Genomic_DNA"/>
</dbReference>
<dbReference type="RefSeq" id="NP_814030.1">
    <property type="nucleotide sequence ID" value="NC_004668.1"/>
</dbReference>
<dbReference type="RefSeq" id="WP_010774253.1">
    <property type="nucleotide sequence ID" value="NZ_KE136524.1"/>
</dbReference>
<dbReference type="SMR" id="Q839D9"/>
<dbReference type="STRING" id="226185.EF_0233"/>
<dbReference type="EnsemblBacteria" id="AAO80101">
    <property type="protein sequence ID" value="AAO80101"/>
    <property type="gene ID" value="EF_0233"/>
</dbReference>
<dbReference type="KEGG" id="efa:EF0233"/>
<dbReference type="PATRIC" id="fig|226185.45.peg.34"/>
<dbReference type="eggNOG" id="COG0202">
    <property type="taxonomic scope" value="Bacteria"/>
</dbReference>
<dbReference type="HOGENOM" id="CLU_053084_0_1_9"/>
<dbReference type="Proteomes" id="UP000001415">
    <property type="component" value="Chromosome"/>
</dbReference>
<dbReference type="GO" id="GO:0005737">
    <property type="term" value="C:cytoplasm"/>
    <property type="evidence" value="ECO:0007669"/>
    <property type="project" value="UniProtKB-ARBA"/>
</dbReference>
<dbReference type="GO" id="GO:0000428">
    <property type="term" value="C:DNA-directed RNA polymerase complex"/>
    <property type="evidence" value="ECO:0007669"/>
    <property type="project" value="UniProtKB-KW"/>
</dbReference>
<dbReference type="GO" id="GO:0003677">
    <property type="term" value="F:DNA binding"/>
    <property type="evidence" value="ECO:0007669"/>
    <property type="project" value="UniProtKB-UniRule"/>
</dbReference>
<dbReference type="GO" id="GO:0003899">
    <property type="term" value="F:DNA-directed RNA polymerase activity"/>
    <property type="evidence" value="ECO:0007669"/>
    <property type="project" value="UniProtKB-UniRule"/>
</dbReference>
<dbReference type="GO" id="GO:0046983">
    <property type="term" value="F:protein dimerization activity"/>
    <property type="evidence" value="ECO:0007669"/>
    <property type="project" value="InterPro"/>
</dbReference>
<dbReference type="GO" id="GO:0006351">
    <property type="term" value="P:DNA-templated transcription"/>
    <property type="evidence" value="ECO:0007669"/>
    <property type="project" value="UniProtKB-UniRule"/>
</dbReference>
<dbReference type="CDD" id="cd06928">
    <property type="entry name" value="RNAP_alpha_NTD"/>
    <property type="match status" value="1"/>
</dbReference>
<dbReference type="FunFam" id="1.10.150.20:FF:000001">
    <property type="entry name" value="DNA-directed RNA polymerase subunit alpha"/>
    <property type="match status" value="1"/>
</dbReference>
<dbReference type="FunFam" id="2.170.120.12:FF:000001">
    <property type="entry name" value="DNA-directed RNA polymerase subunit alpha"/>
    <property type="match status" value="1"/>
</dbReference>
<dbReference type="Gene3D" id="1.10.150.20">
    <property type="entry name" value="5' to 3' exonuclease, C-terminal subdomain"/>
    <property type="match status" value="1"/>
</dbReference>
<dbReference type="Gene3D" id="2.170.120.12">
    <property type="entry name" value="DNA-directed RNA polymerase, insert domain"/>
    <property type="match status" value="1"/>
</dbReference>
<dbReference type="Gene3D" id="3.30.1360.10">
    <property type="entry name" value="RNA polymerase, RBP11-like subunit"/>
    <property type="match status" value="1"/>
</dbReference>
<dbReference type="HAMAP" id="MF_00059">
    <property type="entry name" value="RNApol_bact_RpoA"/>
    <property type="match status" value="1"/>
</dbReference>
<dbReference type="InterPro" id="IPR011262">
    <property type="entry name" value="DNA-dir_RNA_pol_insert"/>
</dbReference>
<dbReference type="InterPro" id="IPR011263">
    <property type="entry name" value="DNA-dir_RNA_pol_RpoA/D/Rpb3"/>
</dbReference>
<dbReference type="InterPro" id="IPR011773">
    <property type="entry name" value="DNA-dir_RpoA"/>
</dbReference>
<dbReference type="InterPro" id="IPR036603">
    <property type="entry name" value="RBP11-like"/>
</dbReference>
<dbReference type="InterPro" id="IPR011260">
    <property type="entry name" value="RNAP_asu_C"/>
</dbReference>
<dbReference type="InterPro" id="IPR036643">
    <property type="entry name" value="RNApol_insert_sf"/>
</dbReference>
<dbReference type="NCBIfam" id="NF003513">
    <property type="entry name" value="PRK05182.1-2"/>
    <property type="match status" value="1"/>
</dbReference>
<dbReference type="NCBIfam" id="NF003515">
    <property type="entry name" value="PRK05182.2-1"/>
    <property type="match status" value="1"/>
</dbReference>
<dbReference type="NCBIfam" id="NF003516">
    <property type="entry name" value="PRK05182.2-2"/>
    <property type="match status" value="1"/>
</dbReference>
<dbReference type="NCBIfam" id="NF003518">
    <property type="entry name" value="PRK05182.2-4"/>
    <property type="match status" value="1"/>
</dbReference>
<dbReference type="NCBIfam" id="NF003519">
    <property type="entry name" value="PRK05182.2-5"/>
    <property type="match status" value="1"/>
</dbReference>
<dbReference type="NCBIfam" id="TIGR02027">
    <property type="entry name" value="rpoA"/>
    <property type="match status" value="1"/>
</dbReference>
<dbReference type="Pfam" id="PF01000">
    <property type="entry name" value="RNA_pol_A_bac"/>
    <property type="match status" value="1"/>
</dbReference>
<dbReference type="Pfam" id="PF03118">
    <property type="entry name" value="RNA_pol_A_CTD"/>
    <property type="match status" value="1"/>
</dbReference>
<dbReference type="Pfam" id="PF01193">
    <property type="entry name" value="RNA_pol_L"/>
    <property type="match status" value="1"/>
</dbReference>
<dbReference type="SMART" id="SM00662">
    <property type="entry name" value="RPOLD"/>
    <property type="match status" value="1"/>
</dbReference>
<dbReference type="SUPFAM" id="SSF47789">
    <property type="entry name" value="C-terminal domain of RNA polymerase alpha subunit"/>
    <property type="match status" value="1"/>
</dbReference>
<dbReference type="SUPFAM" id="SSF56553">
    <property type="entry name" value="Insert subdomain of RNA polymerase alpha subunit"/>
    <property type="match status" value="1"/>
</dbReference>
<dbReference type="SUPFAM" id="SSF55257">
    <property type="entry name" value="RBP11-like subunits of RNA polymerase"/>
    <property type="match status" value="1"/>
</dbReference>
<reference key="1">
    <citation type="journal article" date="2003" name="Science">
        <title>Role of mobile DNA in the evolution of vancomycin-resistant Enterococcus faecalis.</title>
        <authorList>
            <person name="Paulsen I.T."/>
            <person name="Banerjei L."/>
            <person name="Myers G.S.A."/>
            <person name="Nelson K.E."/>
            <person name="Seshadri R."/>
            <person name="Read T.D."/>
            <person name="Fouts D.E."/>
            <person name="Eisen J.A."/>
            <person name="Gill S.R."/>
            <person name="Heidelberg J.F."/>
            <person name="Tettelin H."/>
            <person name="Dodson R.J."/>
            <person name="Umayam L.A."/>
            <person name="Brinkac L.M."/>
            <person name="Beanan M.J."/>
            <person name="Daugherty S.C."/>
            <person name="DeBoy R.T."/>
            <person name="Durkin S.A."/>
            <person name="Kolonay J.F."/>
            <person name="Madupu R."/>
            <person name="Nelson W.C."/>
            <person name="Vamathevan J.J."/>
            <person name="Tran B."/>
            <person name="Upton J."/>
            <person name="Hansen T."/>
            <person name="Shetty J."/>
            <person name="Khouri H.M."/>
            <person name="Utterback T.R."/>
            <person name="Radune D."/>
            <person name="Ketchum K.A."/>
            <person name="Dougherty B.A."/>
            <person name="Fraser C.M."/>
        </authorList>
    </citation>
    <scope>NUCLEOTIDE SEQUENCE [LARGE SCALE GENOMIC DNA]</scope>
    <source>
        <strain>ATCC 700802 / V583</strain>
    </source>
</reference>
<sequence length="312" mass="35050">MIEFEKPRIEKIDENRDYGKFVVEPLERGYGTTLGNSLRRILLSSLPGAAITNIQIDGVLHEFSTIPGVREDVTQIILNIKGLALKLYAEEEKTLEIDITGPATVTAGDIIVDSDVEILNKDLVICSVAEGATFHARLTVKPGRGYVQADENKKEDMPIGVLPVDSIYTPVLRVNYQVENTRVGRRDDFDKLTMEIWTDGSIIPQEALSLAAKIMTEHLDIFVNLTDEAKNAEIMVEKEETQKEKMLEMTIEELDLSVRSYNCLKRAGINTVQELTNKSEPEMIKVRNLGRKSLEEVKLKLHDLGLGLRKDD</sequence>
<comment type="function">
    <text evidence="1">DNA-dependent RNA polymerase catalyzes the transcription of DNA into RNA using the four ribonucleoside triphosphates as substrates.</text>
</comment>
<comment type="catalytic activity">
    <reaction evidence="1">
        <text>RNA(n) + a ribonucleoside 5'-triphosphate = RNA(n+1) + diphosphate</text>
        <dbReference type="Rhea" id="RHEA:21248"/>
        <dbReference type="Rhea" id="RHEA-COMP:14527"/>
        <dbReference type="Rhea" id="RHEA-COMP:17342"/>
        <dbReference type="ChEBI" id="CHEBI:33019"/>
        <dbReference type="ChEBI" id="CHEBI:61557"/>
        <dbReference type="ChEBI" id="CHEBI:140395"/>
        <dbReference type="EC" id="2.7.7.6"/>
    </reaction>
</comment>
<comment type="subunit">
    <text evidence="1">Homodimer. The RNAP catalytic core consists of 2 alpha, 1 beta, 1 beta' and 1 omega subunit. When a sigma factor is associated with the core the holoenzyme is formed, which can initiate transcription.</text>
</comment>
<comment type="domain">
    <text evidence="1">The N-terminal domain is essential for RNAP assembly and basal transcription, whereas the C-terminal domain is involved in interaction with transcriptional regulators and with upstream promoter elements.</text>
</comment>
<comment type="similarity">
    <text evidence="1">Belongs to the RNA polymerase alpha chain family.</text>
</comment>
<proteinExistence type="inferred from homology"/>
<name>RPOA_ENTFA</name>
<gene>
    <name evidence="1" type="primary">rpoA</name>
    <name type="ordered locus">EF_0233</name>
</gene>
<protein>
    <recommendedName>
        <fullName evidence="1">DNA-directed RNA polymerase subunit alpha</fullName>
        <shortName evidence="1">RNAP subunit alpha</shortName>
        <ecNumber evidence="1">2.7.7.6</ecNumber>
    </recommendedName>
    <alternativeName>
        <fullName evidence="1">RNA polymerase subunit alpha</fullName>
    </alternativeName>
    <alternativeName>
        <fullName evidence="1">Transcriptase subunit alpha</fullName>
    </alternativeName>
</protein>
<keyword id="KW-0240">DNA-directed RNA polymerase</keyword>
<keyword id="KW-0548">Nucleotidyltransferase</keyword>
<keyword id="KW-1185">Reference proteome</keyword>
<keyword id="KW-0804">Transcription</keyword>
<keyword id="KW-0808">Transferase</keyword>
<organism>
    <name type="scientific">Enterococcus faecalis (strain ATCC 700802 / V583)</name>
    <dbReference type="NCBI Taxonomy" id="226185"/>
    <lineage>
        <taxon>Bacteria</taxon>
        <taxon>Bacillati</taxon>
        <taxon>Bacillota</taxon>
        <taxon>Bacilli</taxon>
        <taxon>Lactobacillales</taxon>
        <taxon>Enterococcaceae</taxon>
        <taxon>Enterococcus</taxon>
    </lineage>
</organism>